<keyword id="KW-0131">Cell cycle</keyword>
<keyword id="KW-0132">Cell division</keyword>
<keyword id="KW-0143">Chaperone</keyword>
<keyword id="KW-0963">Cytoplasm</keyword>
<keyword id="KW-0413">Isomerase</keyword>
<keyword id="KW-1185">Reference proteome</keyword>
<keyword id="KW-0697">Rotamase</keyword>
<proteinExistence type="inferred from homology"/>
<sequence length="446" mass="51227">MSSTWEKIDKNKIKLSVEVDENRVEDALEQAYKKVVKQVEIPGFRKGKVPRKILENRFGPEVLYEDAIEILVPEAYQEALEEHEIEPVDQPEIDIDQMEKGQPLKFNATVEVKPEVELGTYKGLEVEKEKVEVTEEDVENELKQMQEQHAEYEDVEDGEAENGDRLVIDFEGYVDGEPIEGGQAENHNIELGSNQFIPGFEEQLVGSKPGEEKEVKVTFPEDYQNEELKGKEATFNVKVKEIKKKNLLPIDDEFAKDVSDFDTLEEFKNDIRNRLEEEAERAAEQQVEEQVVTKALENAEVEIPQPMIDQEVDNMLKEFEQNLSYQGLNLDTYYKLANTDEDAMKEQFKGSAETRVKRNLVLEAIKDEEGITATEEEIDEEINKIAEQAQQEADKIKEFLEMQGRMSQLKNEIAIRKSVDLLKDEAKVTVVEKSNDSEEETQGNTE</sequence>
<name>TIG_NATTJ</name>
<comment type="function">
    <text evidence="1">Involved in protein export. Acts as a chaperone by maintaining the newly synthesized protein in an open conformation. Functions as a peptidyl-prolyl cis-trans isomerase.</text>
</comment>
<comment type="catalytic activity">
    <reaction evidence="1">
        <text>[protein]-peptidylproline (omega=180) = [protein]-peptidylproline (omega=0)</text>
        <dbReference type="Rhea" id="RHEA:16237"/>
        <dbReference type="Rhea" id="RHEA-COMP:10747"/>
        <dbReference type="Rhea" id="RHEA-COMP:10748"/>
        <dbReference type="ChEBI" id="CHEBI:83833"/>
        <dbReference type="ChEBI" id="CHEBI:83834"/>
        <dbReference type="EC" id="5.2.1.8"/>
    </reaction>
</comment>
<comment type="subcellular location">
    <subcellularLocation>
        <location>Cytoplasm</location>
    </subcellularLocation>
    <text evidence="1">About half TF is bound to the ribosome near the polypeptide exit tunnel while the other half is free in the cytoplasm.</text>
</comment>
<comment type="domain">
    <text evidence="1">Consists of 3 domains; the N-terminus binds the ribosome, the middle domain has PPIase activity, while the C-terminus has intrinsic chaperone activity on its own.</text>
</comment>
<comment type="similarity">
    <text evidence="1">Belongs to the FKBP-type PPIase family. Tig subfamily.</text>
</comment>
<organism>
    <name type="scientific">Natranaerobius thermophilus (strain ATCC BAA-1301 / DSM 18059 / JW/NM-WN-LF)</name>
    <dbReference type="NCBI Taxonomy" id="457570"/>
    <lineage>
        <taxon>Bacteria</taxon>
        <taxon>Bacillati</taxon>
        <taxon>Bacillota</taxon>
        <taxon>Clostridia</taxon>
        <taxon>Natranaerobiales</taxon>
        <taxon>Natranaerobiaceae</taxon>
        <taxon>Natranaerobius</taxon>
    </lineage>
</organism>
<gene>
    <name evidence="1" type="primary">tig</name>
    <name type="ordered locus">Nther_1101</name>
</gene>
<reference key="1">
    <citation type="submission" date="2008-04" db="EMBL/GenBank/DDBJ databases">
        <title>Complete sequence of chromosome of Natranaerobius thermophilus JW/NM-WN-LF.</title>
        <authorList>
            <consortium name="US DOE Joint Genome Institute"/>
            <person name="Copeland A."/>
            <person name="Lucas S."/>
            <person name="Lapidus A."/>
            <person name="Glavina del Rio T."/>
            <person name="Dalin E."/>
            <person name="Tice H."/>
            <person name="Bruce D."/>
            <person name="Goodwin L."/>
            <person name="Pitluck S."/>
            <person name="Chertkov O."/>
            <person name="Brettin T."/>
            <person name="Detter J.C."/>
            <person name="Han C."/>
            <person name="Kuske C.R."/>
            <person name="Schmutz J."/>
            <person name="Larimer F."/>
            <person name="Land M."/>
            <person name="Hauser L."/>
            <person name="Kyrpides N."/>
            <person name="Lykidis A."/>
            <person name="Mesbah N.M."/>
            <person name="Wiegel J."/>
        </authorList>
    </citation>
    <scope>NUCLEOTIDE SEQUENCE [LARGE SCALE GENOMIC DNA]</scope>
    <source>
        <strain>ATCC BAA-1301 / DSM 18059 / JW/NM-WN-LF</strain>
    </source>
</reference>
<feature type="chain" id="PRO_1000115558" description="Trigger factor">
    <location>
        <begin position="1"/>
        <end position="446"/>
    </location>
</feature>
<feature type="domain" description="PPIase FKBP-type" evidence="1">
    <location>
        <begin position="163"/>
        <end position="248"/>
    </location>
</feature>
<protein>
    <recommendedName>
        <fullName evidence="1">Trigger factor</fullName>
        <shortName evidence="1">TF</shortName>
        <ecNumber evidence="1">5.2.1.8</ecNumber>
    </recommendedName>
    <alternativeName>
        <fullName evidence="1">PPIase</fullName>
    </alternativeName>
</protein>
<accession>B2A157</accession>
<evidence type="ECO:0000255" key="1">
    <source>
        <dbReference type="HAMAP-Rule" id="MF_00303"/>
    </source>
</evidence>
<dbReference type="EC" id="5.2.1.8" evidence="1"/>
<dbReference type="EMBL" id="CP001034">
    <property type="protein sequence ID" value="ACB84684.1"/>
    <property type="molecule type" value="Genomic_DNA"/>
</dbReference>
<dbReference type="RefSeq" id="WP_012447559.1">
    <property type="nucleotide sequence ID" value="NC_010718.1"/>
</dbReference>
<dbReference type="SMR" id="B2A157"/>
<dbReference type="FunCoup" id="B2A157">
    <property type="interactions" value="497"/>
</dbReference>
<dbReference type="STRING" id="457570.Nther_1101"/>
<dbReference type="KEGG" id="nth:Nther_1101"/>
<dbReference type="eggNOG" id="COG0544">
    <property type="taxonomic scope" value="Bacteria"/>
</dbReference>
<dbReference type="HOGENOM" id="CLU_033058_3_2_9"/>
<dbReference type="InParanoid" id="B2A157"/>
<dbReference type="OrthoDB" id="9767721at2"/>
<dbReference type="Proteomes" id="UP000001683">
    <property type="component" value="Chromosome"/>
</dbReference>
<dbReference type="GO" id="GO:0005737">
    <property type="term" value="C:cytoplasm"/>
    <property type="evidence" value="ECO:0007669"/>
    <property type="project" value="UniProtKB-SubCell"/>
</dbReference>
<dbReference type="GO" id="GO:0003755">
    <property type="term" value="F:peptidyl-prolyl cis-trans isomerase activity"/>
    <property type="evidence" value="ECO:0007669"/>
    <property type="project" value="UniProtKB-UniRule"/>
</dbReference>
<dbReference type="GO" id="GO:0044183">
    <property type="term" value="F:protein folding chaperone"/>
    <property type="evidence" value="ECO:0007669"/>
    <property type="project" value="TreeGrafter"/>
</dbReference>
<dbReference type="GO" id="GO:0043022">
    <property type="term" value="F:ribosome binding"/>
    <property type="evidence" value="ECO:0007669"/>
    <property type="project" value="TreeGrafter"/>
</dbReference>
<dbReference type="GO" id="GO:0051083">
    <property type="term" value="P:'de novo' cotranslational protein folding"/>
    <property type="evidence" value="ECO:0007669"/>
    <property type="project" value="TreeGrafter"/>
</dbReference>
<dbReference type="GO" id="GO:0051301">
    <property type="term" value="P:cell division"/>
    <property type="evidence" value="ECO:0007669"/>
    <property type="project" value="UniProtKB-KW"/>
</dbReference>
<dbReference type="GO" id="GO:0061077">
    <property type="term" value="P:chaperone-mediated protein folding"/>
    <property type="evidence" value="ECO:0007669"/>
    <property type="project" value="TreeGrafter"/>
</dbReference>
<dbReference type="GO" id="GO:0015031">
    <property type="term" value="P:protein transport"/>
    <property type="evidence" value="ECO:0007669"/>
    <property type="project" value="UniProtKB-UniRule"/>
</dbReference>
<dbReference type="GO" id="GO:0043335">
    <property type="term" value="P:protein unfolding"/>
    <property type="evidence" value="ECO:0007669"/>
    <property type="project" value="TreeGrafter"/>
</dbReference>
<dbReference type="FunFam" id="3.10.50.40:FF:000001">
    <property type="entry name" value="Trigger factor"/>
    <property type="match status" value="1"/>
</dbReference>
<dbReference type="Gene3D" id="3.10.50.40">
    <property type="match status" value="1"/>
</dbReference>
<dbReference type="Gene3D" id="3.30.70.1050">
    <property type="entry name" value="Trigger factor ribosome-binding domain"/>
    <property type="match status" value="1"/>
</dbReference>
<dbReference type="Gene3D" id="1.10.3120.10">
    <property type="entry name" value="Trigger factor, C-terminal domain"/>
    <property type="match status" value="1"/>
</dbReference>
<dbReference type="HAMAP" id="MF_00303">
    <property type="entry name" value="Trigger_factor_Tig"/>
    <property type="match status" value="1"/>
</dbReference>
<dbReference type="InterPro" id="IPR046357">
    <property type="entry name" value="PPIase_dom_sf"/>
</dbReference>
<dbReference type="InterPro" id="IPR001179">
    <property type="entry name" value="PPIase_FKBP_dom"/>
</dbReference>
<dbReference type="InterPro" id="IPR005215">
    <property type="entry name" value="Trig_fac"/>
</dbReference>
<dbReference type="InterPro" id="IPR008880">
    <property type="entry name" value="Trigger_fac_C"/>
</dbReference>
<dbReference type="InterPro" id="IPR037041">
    <property type="entry name" value="Trigger_fac_C_sf"/>
</dbReference>
<dbReference type="InterPro" id="IPR008881">
    <property type="entry name" value="Trigger_fac_ribosome-bd_bac"/>
</dbReference>
<dbReference type="InterPro" id="IPR036611">
    <property type="entry name" value="Trigger_fac_ribosome-bd_sf"/>
</dbReference>
<dbReference type="InterPro" id="IPR027304">
    <property type="entry name" value="Trigger_fact/SurA_dom_sf"/>
</dbReference>
<dbReference type="NCBIfam" id="TIGR00115">
    <property type="entry name" value="tig"/>
    <property type="match status" value="1"/>
</dbReference>
<dbReference type="PANTHER" id="PTHR30560">
    <property type="entry name" value="TRIGGER FACTOR CHAPERONE AND PEPTIDYL-PROLYL CIS/TRANS ISOMERASE"/>
    <property type="match status" value="1"/>
</dbReference>
<dbReference type="PANTHER" id="PTHR30560:SF3">
    <property type="entry name" value="TRIGGER FACTOR-LIKE PROTEIN TIG, CHLOROPLASTIC"/>
    <property type="match status" value="1"/>
</dbReference>
<dbReference type="Pfam" id="PF00254">
    <property type="entry name" value="FKBP_C"/>
    <property type="match status" value="1"/>
</dbReference>
<dbReference type="Pfam" id="PF05698">
    <property type="entry name" value="Trigger_C"/>
    <property type="match status" value="1"/>
</dbReference>
<dbReference type="Pfam" id="PF05697">
    <property type="entry name" value="Trigger_N"/>
    <property type="match status" value="1"/>
</dbReference>
<dbReference type="PIRSF" id="PIRSF003095">
    <property type="entry name" value="Trigger_factor"/>
    <property type="match status" value="1"/>
</dbReference>
<dbReference type="SUPFAM" id="SSF54534">
    <property type="entry name" value="FKBP-like"/>
    <property type="match status" value="1"/>
</dbReference>
<dbReference type="SUPFAM" id="SSF109998">
    <property type="entry name" value="Triger factor/SurA peptide-binding domain-like"/>
    <property type="match status" value="1"/>
</dbReference>
<dbReference type="SUPFAM" id="SSF102735">
    <property type="entry name" value="Trigger factor ribosome-binding domain"/>
    <property type="match status" value="1"/>
</dbReference>
<dbReference type="PROSITE" id="PS50059">
    <property type="entry name" value="FKBP_PPIASE"/>
    <property type="match status" value="1"/>
</dbReference>